<sequence length="221" mass="25422">MKYKPVHRFDMSPKDMIKVQKQLAKEVKLIHFSDEPNLVSGVDLSFPKDEGLAVIVTMDFKKLSVIDVTYAVDKITLPYIPGLLAFRELPIFLKAWEKLEIEPDIVFFDGQGYAHPRRMGIATHASFFIEKPTIGIAKSKLIGEYEEPGKKKGEFTFLYHKDEKIGIVLRTRDNVKPVFVSPGNLVDFNNALDFTYHFATKYKIPEITRKAHLYTQSLKQR</sequence>
<reference key="1">
    <citation type="submission" date="2007-11" db="EMBL/GenBank/DDBJ databases">
        <title>Complete sequence of Petroga mobilis SJ95.</title>
        <authorList>
            <consortium name="US DOE Joint Genome Institute"/>
            <person name="Copeland A."/>
            <person name="Lucas S."/>
            <person name="Lapidus A."/>
            <person name="Barry K."/>
            <person name="Glavina del Rio T."/>
            <person name="Dalin E."/>
            <person name="Tice H."/>
            <person name="Pitluck S."/>
            <person name="Meincke L."/>
            <person name="Brettin T."/>
            <person name="Bruce D."/>
            <person name="Detter J.C."/>
            <person name="Han C."/>
            <person name="Kuske C.R."/>
            <person name="Schmutz J."/>
            <person name="Larimer F."/>
            <person name="Land M."/>
            <person name="Hauser L."/>
            <person name="Kyrpides N."/>
            <person name="Mikhailova N."/>
            <person name="Noll K."/>
            <person name="Richardson P."/>
        </authorList>
    </citation>
    <scope>NUCLEOTIDE SEQUENCE [LARGE SCALE GENOMIC DNA]</scope>
    <source>
        <strain>DSM 10674 / SJ95</strain>
    </source>
</reference>
<organism>
    <name type="scientific">Petrotoga mobilis (strain DSM 10674 / SJ95)</name>
    <dbReference type="NCBI Taxonomy" id="403833"/>
    <lineage>
        <taxon>Bacteria</taxon>
        <taxon>Thermotogati</taxon>
        <taxon>Thermotogota</taxon>
        <taxon>Thermotogae</taxon>
        <taxon>Petrotogales</taxon>
        <taxon>Petrotogaceae</taxon>
        <taxon>Petrotoga</taxon>
    </lineage>
</organism>
<dbReference type="EC" id="3.1.21.7" evidence="1"/>
<dbReference type="EMBL" id="CP000879">
    <property type="protein sequence ID" value="ABX31891.1"/>
    <property type="molecule type" value="Genomic_DNA"/>
</dbReference>
<dbReference type="RefSeq" id="WP_012208992.1">
    <property type="nucleotide sequence ID" value="NC_010003.1"/>
</dbReference>
<dbReference type="SMR" id="A9BHL9"/>
<dbReference type="STRING" id="403833.Pmob_1173"/>
<dbReference type="KEGG" id="pmo:Pmob_1173"/>
<dbReference type="eggNOG" id="COG1515">
    <property type="taxonomic scope" value="Bacteria"/>
</dbReference>
<dbReference type="HOGENOM" id="CLU_047631_1_1_0"/>
<dbReference type="OrthoDB" id="9790916at2"/>
<dbReference type="Proteomes" id="UP000000789">
    <property type="component" value="Chromosome"/>
</dbReference>
<dbReference type="GO" id="GO:0005737">
    <property type="term" value="C:cytoplasm"/>
    <property type="evidence" value="ECO:0007669"/>
    <property type="project" value="UniProtKB-SubCell"/>
</dbReference>
<dbReference type="GO" id="GO:0043737">
    <property type="term" value="F:deoxyribonuclease V activity"/>
    <property type="evidence" value="ECO:0007669"/>
    <property type="project" value="UniProtKB-UniRule"/>
</dbReference>
<dbReference type="GO" id="GO:0000287">
    <property type="term" value="F:magnesium ion binding"/>
    <property type="evidence" value="ECO:0007669"/>
    <property type="project" value="UniProtKB-UniRule"/>
</dbReference>
<dbReference type="GO" id="GO:0016891">
    <property type="term" value="F:RNA endonuclease activity, producing 5'-phosphomonoesters"/>
    <property type="evidence" value="ECO:0007669"/>
    <property type="project" value="TreeGrafter"/>
</dbReference>
<dbReference type="GO" id="GO:0003727">
    <property type="term" value="F:single-stranded RNA binding"/>
    <property type="evidence" value="ECO:0007669"/>
    <property type="project" value="TreeGrafter"/>
</dbReference>
<dbReference type="GO" id="GO:0006281">
    <property type="term" value="P:DNA repair"/>
    <property type="evidence" value="ECO:0007669"/>
    <property type="project" value="UniProtKB-UniRule"/>
</dbReference>
<dbReference type="CDD" id="cd06559">
    <property type="entry name" value="Endonuclease_V"/>
    <property type="match status" value="1"/>
</dbReference>
<dbReference type="FunFam" id="3.30.2170.10:FF:000008">
    <property type="entry name" value="Endonuclease V"/>
    <property type="match status" value="1"/>
</dbReference>
<dbReference type="Gene3D" id="3.30.2170.10">
    <property type="entry name" value="archaeoglobus fulgidus dsm 4304 superfamily"/>
    <property type="match status" value="1"/>
</dbReference>
<dbReference type="HAMAP" id="MF_00801">
    <property type="entry name" value="Endonuclease_5"/>
    <property type="match status" value="1"/>
</dbReference>
<dbReference type="InterPro" id="IPR007581">
    <property type="entry name" value="Endonuclease-V"/>
</dbReference>
<dbReference type="InterPro" id="IPR053396">
    <property type="entry name" value="Endonuclease_V-like"/>
</dbReference>
<dbReference type="NCBIfam" id="NF041102">
    <property type="entry name" value="endonuc_V_Ttgales"/>
    <property type="match status" value="1"/>
</dbReference>
<dbReference type="PANTHER" id="PTHR28511">
    <property type="entry name" value="ENDONUCLEASE V"/>
    <property type="match status" value="1"/>
</dbReference>
<dbReference type="PANTHER" id="PTHR28511:SF1">
    <property type="entry name" value="ENDONUCLEASE V"/>
    <property type="match status" value="1"/>
</dbReference>
<dbReference type="Pfam" id="PF04493">
    <property type="entry name" value="Endonuclease_5"/>
    <property type="match status" value="1"/>
</dbReference>
<gene>
    <name evidence="1" type="primary">nfi</name>
    <name type="ordered locus">Pmob_1173</name>
</gene>
<accession>A9BHL9</accession>
<name>NFI_PETMO</name>
<protein>
    <recommendedName>
        <fullName evidence="1">Endonuclease V</fullName>
        <ecNumber evidence="1">3.1.21.7</ecNumber>
    </recommendedName>
    <alternativeName>
        <fullName evidence="1">Deoxyinosine 3'endonuclease</fullName>
    </alternativeName>
    <alternativeName>
        <fullName evidence="1">Deoxyribonuclease V</fullName>
        <shortName evidence="1">DNase V</shortName>
    </alternativeName>
</protein>
<comment type="function">
    <text evidence="1">DNA repair enzyme involved in the repair of deaminated bases. Selectively cleaves double-stranded DNA at the second phosphodiester bond 3' to a deoxyinosine leaving behind the intact lesion on the nicked DNA.</text>
</comment>
<comment type="catalytic activity">
    <reaction evidence="1">
        <text>Endonucleolytic cleavage at apurinic or apyrimidinic sites to products with a 5'-phosphate.</text>
        <dbReference type="EC" id="3.1.21.7"/>
    </reaction>
</comment>
<comment type="cofactor">
    <cofactor evidence="1">
        <name>Mg(2+)</name>
        <dbReference type="ChEBI" id="CHEBI:18420"/>
    </cofactor>
</comment>
<comment type="subcellular location">
    <subcellularLocation>
        <location evidence="1">Cytoplasm</location>
    </subcellularLocation>
</comment>
<comment type="similarity">
    <text evidence="1">Belongs to the endonuclease V family.</text>
</comment>
<proteinExistence type="inferred from homology"/>
<evidence type="ECO:0000255" key="1">
    <source>
        <dbReference type="HAMAP-Rule" id="MF_00801"/>
    </source>
</evidence>
<keyword id="KW-0963">Cytoplasm</keyword>
<keyword id="KW-0227">DNA damage</keyword>
<keyword id="KW-0234">DNA repair</keyword>
<keyword id="KW-0255">Endonuclease</keyword>
<keyword id="KW-0378">Hydrolase</keyword>
<keyword id="KW-0460">Magnesium</keyword>
<keyword id="KW-0479">Metal-binding</keyword>
<keyword id="KW-0540">Nuclease</keyword>
<feature type="chain" id="PRO_1000083697" description="Endonuclease V">
    <location>
        <begin position="1"/>
        <end position="221"/>
    </location>
</feature>
<feature type="binding site" evidence="1">
    <location>
        <position position="43"/>
    </location>
    <ligand>
        <name>Mg(2+)</name>
        <dbReference type="ChEBI" id="CHEBI:18420"/>
    </ligand>
</feature>
<feature type="binding site" evidence="1">
    <location>
        <position position="109"/>
    </location>
    <ligand>
        <name>Mg(2+)</name>
        <dbReference type="ChEBI" id="CHEBI:18420"/>
    </ligand>
</feature>
<feature type="site" description="Interaction with target DNA" evidence="1">
    <location>
        <position position="79"/>
    </location>
</feature>